<name>RL10_BRUMB</name>
<sequence length="172" mass="17945">MDRAEKREFVAWLNGAFKESGSVVVAHYTGLTVAQMSDLRSKMRDAGGSVKVAKNRLAKIALQGTESEGIADLFTGQTVVAYANDPITAPKVAVEFAKANDKLVILGGAMGATTLNADGVKSLASLPSLDELRAKLVGMIQTPAQRLAVLTSAPAGQIARVIGAHARKNEAA</sequence>
<reference key="1">
    <citation type="submission" date="2009-03" db="EMBL/GenBank/DDBJ databases">
        <title>Brucella melitensis ATCC 23457 whole genome shotgun sequencing project.</title>
        <authorList>
            <person name="Setubal J.C."/>
            <person name="Boyle S."/>
            <person name="Crasta O.R."/>
            <person name="Gillespie J.J."/>
            <person name="Kenyon R.W."/>
            <person name="Lu J."/>
            <person name="Mane S."/>
            <person name="Nagrani S."/>
            <person name="Shallom J.M."/>
            <person name="Shallom S."/>
            <person name="Shukla M."/>
            <person name="Snyder E.E."/>
            <person name="Sobral B.W."/>
            <person name="Wattam A.R."/>
            <person name="Will R."/>
            <person name="Williams K."/>
            <person name="Yoo H."/>
            <person name="Munk C."/>
            <person name="Tapia R."/>
            <person name="Han C."/>
            <person name="Detter J.C."/>
            <person name="Bruce D."/>
            <person name="Brettin T.S."/>
        </authorList>
    </citation>
    <scope>NUCLEOTIDE SEQUENCE [LARGE SCALE GENOMIC DNA]</scope>
    <source>
        <strain>ATCC 23457</strain>
    </source>
</reference>
<proteinExistence type="inferred from homology"/>
<accession>C0RJL3</accession>
<comment type="function">
    <text evidence="1">Forms part of the ribosomal stalk, playing a central role in the interaction of the ribosome with GTP-bound translation factors.</text>
</comment>
<comment type="subunit">
    <text evidence="1">Part of the ribosomal stalk of the 50S ribosomal subunit. The N-terminus interacts with L11 and the large rRNA to form the base of the stalk. The C-terminus forms an elongated spine to which L12 dimers bind in a sequential fashion forming a multimeric L10(L12)X complex.</text>
</comment>
<comment type="similarity">
    <text evidence="1">Belongs to the universal ribosomal protein uL10 family.</text>
</comment>
<feature type="chain" id="PRO_1000195531" description="Large ribosomal subunit protein uL10">
    <location>
        <begin position="1"/>
        <end position="172"/>
    </location>
</feature>
<organism>
    <name type="scientific">Brucella melitensis biotype 2 (strain ATCC 23457)</name>
    <dbReference type="NCBI Taxonomy" id="546272"/>
    <lineage>
        <taxon>Bacteria</taxon>
        <taxon>Pseudomonadati</taxon>
        <taxon>Pseudomonadota</taxon>
        <taxon>Alphaproteobacteria</taxon>
        <taxon>Hyphomicrobiales</taxon>
        <taxon>Brucellaceae</taxon>
        <taxon>Brucella/Ochrobactrum group</taxon>
        <taxon>Brucella</taxon>
    </lineage>
</organism>
<dbReference type="EMBL" id="CP001488">
    <property type="protein sequence ID" value="ACO01021.1"/>
    <property type="molecule type" value="Genomic_DNA"/>
</dbReference>
<dbReference type="RefSeq" id="WP_002964372.1">
    <property type="nucleotide sequence ID" value="NC_012441.1"/>
</dbReference>
<dbReference type="SMR" id="C0RJL3"/>
<dbReference type="GeneID" id="93016430"/>
<dbReference type="KEGG" id="bmi:BMEA_A1290"/>
<dbReference type="HOGENOM" id="CLU_092227_0_0_5"/>
<dbReference type="Proteomes" id="UP000001748">
    <property type="component" value="Chromosome I"/>
</dbReference>
<dbReference type="GO" id="GO:0015934">
    <property type="term" value="C:large ribosomal subunit"/>
    <property type="evidence" value="ECO:0007669"/>
    <property type="project" value="InterPro"/>
</dbReference>
<dbReference type="GO" id="GO:0070180">
    <property type="term" value="F:large ribosomal subunit rRNA binding"/>
    <property type="evidence" value="ECO:0007669"/>
    <property type="project" value="UniProtKB-UniRule"/>
</dbReference>
<dbReference type="GO" id="GO:0003735">
    <property type="term" value="F:structural constituent of ribosome"/>
    <property type="evidence" value="ECO:0007669"/>
    <property type="project" value="InterPro"/>
</dbReference>
<dbReference type="GO" id="GO:0006412">
    <property type="term" value="P:translation"/>
    <property type="evidence" value="ECO:0007669"/>
    <property type="project" value="UniProtKB-UniRule"/>
</dbReference>
<dbReference type="CDD" id="cd05797">
    <property type="entry name" value="Ribosomal_L10"/>
    <property type="match status" value="1"/>
</dbReference>
<dbReference type="Gene3D" id="3.30.70.1730">
    <property type="match status" value="1"/>
</dbReference>
<dbReference type="Gene3D" id="6.10.250.290">
    <property type="match status" value="1"/>
</dbReference>
<dbReference type="HAMAP" id="MF_00362">
    <property type="entry name" value="Ribosomal_uL10"/>
    <property type="match status" value="1"/>
</dbReference>
<dbReference type="InterPro" id="IPR001790">
    <property type="entry name" value="Ribosomal_uL10"/>
</dbReference>
<dbReference type="InterPro" id="IPR043141">
    <property type="entry name" value="Ribosomal_uL10-like_sf"/>
</dbReference>
<dbReference type="InterPro" id="IPR022973">
    <property type="entry name" value="Ribosomal_uL10_bac"/>
</dbReference>
<dbReference type="InterPro" id="IPR047865">
    <property type="entry name" value="Ribosomal_uL10_bac_type"/>
</dbReference>
<dbReference type="InterPro" id="IPR002363">
    <property type="entry name" value="Ribosomal_uL10_CS_bac"/>
</dbReference>
<dbReference type="NCBIfam" id="NF000955">
    <property type="entry name" value="PRK00099.1-1"/>
    <property type="match status" value="1"/>
</dbReference>
<dbReference type="PANTHER" id="PTHR11560">
    <property type="entry name" value="39S RIBOSOMAL PROTEIN L10, MITOCHONDRIAL"/>
    <property type="match status" value="1"/>
</dbReference>
<dbReference type="Pfam" id="PF00466">
    <property type="entry name" value="Ribosomal_L10"/>
    <property type="match status" value="1"/>
</dbReference>
<dbReference type="SUPFAM" id="SSF160369">
    <property type="entry name" value="Ribosomal protein L10-like"/>
    <property type="match status" value="1"/>
</dbReference>
<dbReference type="PROSITE" id="PS01109">
    <property type="entry name" value="RIBOSOMAL_L10"/>
    <property type="match status" value="1"/>
</dbReference>
<keyword id="KW-0687">Ribonucleoprotein</keyword>
<keyword id="KW-0689">Ribosomal protein</keyword>
<keyword id="KW-0694">RNA-binding</keyword>
<keyword id="KW-0699">rRNA-binding</keyword>
<gene>
    <name evidence="1" type="primary">rplJ</name>
    <name type="ordered locus">BMEA_A1290</name>
</gene>
<evidence type="ECO:0000255" key="1">
    <source>
        <dbReference type="HAMAP-Rule" id="MF_00362"/>
    </source>
</evidence>
<evidence type="ECO:0000305" key="2"/>
<protein>
    <recommendedName>
        <fullName evidence="1">Large ribosomal subunit protein uL10</fullName>
    </recommendedName>
    <alternativeName>
        <fullName evidence="2">50S ribosomal protein L10</fullName>
    </alternativeName>
</protein>